<sequence>MSALFLAIPLTIFVLFVLPIWLWLHYSNRSGRSELSQSEQQRLAQLADEAKRMRERIQALESILDAEHPNWRDR</sequence>
<dbReference type="EMBL" id="X57560">
    <property type="protein sequence ID" value="CAA40790.1"/>
    <property type="molecule type" value="Genomic_DNA"/>
</dbReference>
<dbReference type="EMBL" id="U00096">
    <property type="protein sequence ID" value="AAC74387.1"/>
    <property type="molecule type" value="Genomic_DNA"/>
</dbReference>
<dbReference type="EMBL" id="AP009048">
    <property type="protein sequence ID" value="BAA14874.1"/>
    <property type="molecule type" value="Genomic_DNA"/>
</dbReference>
<dbReference type="PIR" id="S17122">
    <property type="entry name" value="S17122"/>
</dbReference>
<dbReference type="RefSeq" id="NP_415821.1">
    <property type="nucleotide sequence ID" value="NC_000913.3"/>
</dbReference>
<dbReference type="RefSeq" id="WP_001274963.1">
    <property type="nucleotide sequence ID" value="NZ_STEB01000005.1"/>
</dbReference>
<dbReference type="SMR" id="P0AFM9"/>
<dbReference type="BioGRID" id="4263233">
    <property type="interactions" value="301"/>
</dbReference>
<dbReference type="ComplexPortal" id="CPX-5892">
    <property type="entry name" value="PspBC inner membrane stress response complex"/>
</dbReference>
<dbReference type="DIP" id="DIP-10588N"/>
<dbReference type="FunCoup" id="P0AFM9">
    <property type="interactions" value="27"/>
</dbReference>
<dbReference type="IntAct" id="P0AFM9">
    <property type="interactions" value="3"/>
</dbReference>
<dbReference type="STRING" id="511145.b1305"/>
<dbReference type="jPOST" id="P0AFM9"/>
<dbReference type="PaxDb" id="511145-b1305"/>
<dbReference type="EnsemblBacteria" id="AAC74387">
    <property type="protein sequence ID" value="AAC74387"/>
    <property type="gene ID" value="b1305"/>
</dbReference>
<dbReference type="GeneID" id="75203420"/>
<dbReference type="GeneID" id="945893"/>
<dbReference type="KEGG" id="ecj:JW1298"/>
<dbReference type="KEGG" id="eco:b1305"/>
<dbReference type="KEGG" id="ecoc:C3026_07655"/>
<dbReference type="PATRIC" id="fig|1411691.4.peg.974"/>
<dbReference type="EchoBASE" id="EB0770"/>
<dbReference type="eggNOG" id="ENOG5032YI2">
    <property type="taxonomic scope" value="Bacteria"/>
</dbReference>
<dbReference type="HOGENOM" id="CLU_178570_0_0_6"/>
<dbReference type="InParanoid" id="P0AFM9"/>
<dbReference type="OMA" id="LWLHYSQ"/>
<dbReference type="PhylomeDB" id="P0AFM9"/>
<dbReference type="BioCyc" id="EcoCyc:EG10777-MONOMER"/>
<dbReference type="PRO" id="PR:P0AFM9"/>
<dbReference type="Proteomes" id="UP000000625">
    <property type="component" value="Chromosome"/>
</dbReference>
<dbReference type="GO" id="GO:0005886">
    <property type="term" value="C:plasma membrane"/>
    <property type="evidence" value="ECO:0000303"/>
    <property type="project" value="ComplexPortal"/>
</dbReference>
<dbReference type="GO" id="GO:0009271">
    <property type="term" value="P:phage shock"/>
    <property type="evidence" value="ECO:0007669"/>
    <property type="project" value="InterPro"/>
</dbReference>
<dbReference type="GO" id="GO:0080135">
    <property type="term" value="P:regulation of cellular response to stress"/>
    <property type="evidence" value="ECO:0000303"/>
    <property type="project" value="ComplexPortal"/>
</dbReference>
<dbReference type="GO" id="GO:0006355">
    <property type="term" value="P:regulation of DNA-templated transcription"/>
    <property type="evidence" value="ECO:0007669"/>
    <property type="project" value="InterPro"/>
</dbReference>
<dbReference type="InterPro" id="IPR009554">
    <property type="entry name" value="Phageshock_PspB"/>
</dbReference>
<dbReference type="NCBIfam" id="TIGR02976">
    <property type="entry name" value="phageshock_pspB"/>
    <property type="match status" value="1"/>
</dbReference>
<dbReference type="NCBIfam" id="NF006993">
    <property type="entry name" value="PRK09458.1"/>
    <property type="match status" value="1"/>
</dbReference>
<dbReference type="Pfam" id="PF06667">
    <property type="entry name" value="PspB"/>
    <property type="match status" value="1"/>
</dbReference>
<reference key="1">
    <citation type="journal article" date="1991" name="J. Mol. Biol.">
        <title>Characterization and sequence of the Escherichia coli stress-induced psp operon.</title>
        <authorList>
            <person name="Brissette J.L."/>
            <person name="Weiner L."/>
            <person name="Ripmaster T.L."/>
            <person name="Model P."/>
        </authorList>
    </citation>
    <scope>NUCLEOTIDE SEQUENCE [GENOMIC DNA]</scope>
    <scope>FUNCTION</scope>
    <scope>INDUCTION</scope>
    <source>
        <strain>K12</strain>
    </source>
</reference>
<reference key="2">
    <citation type="journal article" date="1996" name="DNA Res.">
        <title>A 570-kb DNA sequence of the Escherichia coli K-12 genome corresponding to the 28.0-40.1 min region on the linkage map.</title>
        <authorList>
            <person name="Aiba H."/>
            <person name="Baba T."/>
            <person name="Fujita K."/>
            <person name="Hayashi K."/>
            <person name="Inada T."/>
            <person name="Isono K."/>
            <person name="Itoh T."/>
            <person name="Kasai H."/>
            <person name="Kashimoto K."/>
            <person name="Kimura S."/>
            <person name="Kitakawa M."/>
            <person name="Kitagawa M."/>
            <person name="Makino K."/>
            <person name="Miki T."/>
            <person name="Mizobuchi K."/>
            <person name="Mori H."/>
            <person name="Mori T."/>
            <person name="Motomura K."/>
            <person name="Nakade S."/>
            <person name="Nakamura Y."/>
            <person name="Nashimoto H."/>
            <person name="Nishio Y."/>
            <person name="Oshima T."/>
            <person name="Saito N."/>
            <person name="Sampei G."/>
            <person name="Seki Y."/>
            <person name="Sivasundaram S."/>
            <person name="Tagami H."/>
            <person name="Takeda J."/>
            <person name="Takemoto K."/>
            <person name="Takeuchi Y."/>
            <person name="Wada C."/>
            <person name="Yamamoto Y."/>
            <person name="Horiuchi T."/>
        </authorList>
    </citation>
    <scope>NUCLEOTIDE SEQUENCE [LARGE SCALE GENOMIC DNA]</scope>
    <source>
        <strain>K12 / W3110 / ATCC 27325 / DSM 5911</strain>
    </source>
</reference>
<reference key="3">
    <citation type="journal article" date="1997" name="Science">
        <title>The complete genome sequence of Escherichia coli K-12.</title>
        <authorList>
            <person name="Blattner F.R."/>
            <person name="Plunkett G. III"/>
            <person name="Bloch C.A."/>
            <person name="Perna N.T."/>
            <person name="Burland V."/>
            <person name="Riley M."/>
            <person name="Collado-Vides J."/>
            <person name="Glasner J.D."/>
            <person name="Rode C.K."/>
            <person name="Mayhew G.F."/>
            <person name="Gregor J."/>
            <person name="Davis N.W."/>
            <person name="Kirkpatrick H.A."/>
            <person name="Goeden M.A."/>
            <person name="Rose D.J."/>
            <person name="Mau B."/>
            <person name="Shao Y."/>
        </authorList>
    </citation>
    <scope>NUCLEOTIDE SEQUENCE [LARGE SCALE GENOMIC DNA]</scope>
    <source>
        <strain>K12 / MG1655 / ATCC 47076</strain>
    </source>
</reference>
<reference key="4">
    <citation type="journal article" date="2006" name="Mol. Syst. Biol.">
        <title>Highly accurate genome sequences of Escherichia coli K-12 strains MG1655 and W3110.</title>
        <authorList>
            <person name="Hayashi K."/>
            <person name="Morooka N."/>
            <person name="Yamamoto Y."/>
            <person name="Fujita K."/>
            <person name="Isono K."/>
            <person name="Choi S."/>
            <person name="Ohtsubo E."/>
            <person name="Baba T."/>
            <person name="Wanner B.L."/>
            <person name="Mori H."/>
            <person name="Horiuchi T."/>
        </authorList>
    </citation>
    <scope>NUCLEOTIDE SEQUENCE [LARGE SCALE GENOMIC DNA]</scope>
    <source>
        <strain>K12 / W3110 / ATCC 27325 / DSM 5911</strain>
    </source>
</reference>
<reference key="5">
    <citation type="journal article" date="2003" name="J. Bacteriol.">
        <title>Interactions between phage-shock proteins in Escherichia coli.</title>
        <authorList>
            <person name="Adams H."/>
            <person name="Teertstra W."/>
            <person name="Demmers J."/>
            <person name="Boesten R."/>
            <person name="Tommassen J."/>
        </authorList>
    </citation>
    <scope>INTERACTION WITH PSPA</scope>
    <source>
        <strain>K12</strain>
    </source>
</reference>
<evidence type="ECO:0000255" key="1"/>
<evidence type="ECO:0000269" key="2">
    <source>
    </source>
</evidence>
<evidence type="ECO:0000269" key="3">
    <source>
    </source>
</evidence>
<evidence type="ECO:0000305" key="4"/>
<proteinExistence type="evidence at protein level"/>
<gene>
    <name type="primary">pspB</name>
    <name type="ordered locus">b1305</name>
    <name type="ordered locus">JW1298</name>
</gene>
<organism>
    <name type="scientific">Escherichia coli (strain K12)</name>
    <dbReference type="NCBI Taxonomy" id="83333"/>
    <lineage>
        <taxon>Bacteria</taxon>
        <taxon>Pseudomonadati</taxon>
        <taxon>Pseudomonadota</taxon>
        <taxon>Gammaproteobacteria</taxon>
        <taxon>Enterobacterales</taxon>
        <taxon>Enterobacteriaceae</taxon>
        <taxon>Escherichia</taxon>
    </lineage>
</organism>
<comment type="function">
    <text evidence="3">The phage shock protein (psp) operon (pspABCDE) may play a significant role in the competition for survival under nutrient- or energy-limited conditions. PspB is involved in transcription regulation.</text>
</comment>
<comment type="subunit">
    <text evidence="2">Interacts with PspA; could bind PspA only in the presence of PspC.</text>
</comment>
<comment type="interaction">
    <interactant intactId="EBI-6408513">
        <id>P0AFM9</id>
    </interactant>
    <interactant intactId="EBI-1134561">
        <id>P0AFN2</id>
        <label>pspC</label>
    </interactant>
    <organismsDiffer>false</organismsDiffer>
    <experiments>5</experiments>
</comment>
<comment type="subcellular location">
    <subcellularLocation>
        <location>Cell inner membrane</location>
        <topology>Single-pass membrane protein</topology>
    </subcellularLocation>
</comment>
<comment type="induction">
    <text evidence="3">By heat, ethanol, osmotic shock and infection by filamentous bacteriophages.</text>
</comment>
<comment type="similarity">
    <text evidence="4">Belongs to the PspB family.</text>
</comment>
<keyword id="KW-0997">Cell inner membrane</keyword>
<keyword id="KW-1003">Cell membrane</keyword>
<keyword id="KW-0175">Coiled coil</keyword>
<keyword id="KW-0472">Membrane</keyword>
<keyword id="KW-1185">Reference proteome</keyword>
<keyword id="KW-0346">Stress response</keyword>
<keyword id="KW-0812">Transmembrane</keyword>
<keyword id="KW-1133">Transmembrane helix</keyword>
<feature type="chain" id="PRO_0000097071" description="Phage shock protein B">
    <location>
        <begin position="1"/>
        <end position="74"/>
    </location>
</feature>
<feature type="transmembrane region" description="Helical" evidence="1">
    <location>
        <begin position="4"/>
        <end position="24"/>
    </location>
</feature>
<feature type="coiled-coil region" evidence="1">
    <location>
        <begin position="33"/>
        <end position="68"/>
    </location>
</feature>
<accession>P0AFM9</accession>
<accession>P23854</accession>
<name>PSPB_ECOLI</name>
<protein>
    <recommendedName>
        <fullName>Phage shock protein B</fullName>
    </recommendedName>
</protein>